<organism>
    <name type="scientific">Methanocaldococcus jannaschii (strain ATCC 43067 / DSM 2661 / JAL-1 / JCM 10045 / NBRC 100440)</name>
    <name type="common">Methanococcus jannaschii</name>
    <dbReference type="NCBI Taxonomy" id="243232"/>
    <lineage>
        <taxon>Archaea</taxon>
        <taxon>Methanobacteriati</taxon>
        <taxon>Methanobacteriota</taxon>
        <taxon>Methanomada group</taxon>
        <taxon>Methanococci</taxon>
        <taxon>Methanococcales</taxon>
        <taxon>Methanocaldococcaceae</taxon>
        <taxon>Methanocaldococcus</taxon>
    </lineage>
</organism>
<sequence length="133" mass="15207">MKFFLNTGRTIWQGEAMEAGKNLDLYVKAAGVVYINEEDMEKLGVKEGDKVKVKSEYGEVVVYVKKATERMPEGMIYIPMGPWANCVVKPDTHSTGMPTFKGYPGFYVEVEKTDEEFLDMRSLMRKKYIEAVE</sequence>
<feature type="chain" id="PRO_0000087393" description="Protein FwdD">
    <location>
        <begin position="1"/>
        <end position="133"/>
    </location>
</feature>
<reference key="1">
    <citation type="journal article" date="1996" name="Science">
        <title>Complete genome sequence of the methanogenic archaeon, Methanococcus jannaschii.</title>
        <authorList>
            <person name="Bult C.J."/>
            <person name="White O."/>
            <person name="Olsen G.J."/>
            <person name="Zhou L."/>
            <person name="Fleischmann R.D."/>
            <person name="Sutton G.G."/>
            <person name="Blake J.A."/>
            <person name="FitzGerald L.M."/>
            <person name="Clayton R.A."/>
            <person name="Gocayne J.D."/>
            <person name="Kerlavage A.R."/>
            <person name="Dougherty B.A."/>
            <person name="Tomb J.-F."/>
            <person name="Adams M.D."/>
            <person name="Reich C.I."/>
            <person name="Overbeek R."/>
            <person name="Kirkness E.F."/>
            <person name="Weinstock K.G."/>
            <person name="Merrick J.M."/>
            <person name="Glodek A."/>
            <person name="Scott J.L."/>
            <person name="Geoghagen N.S.M."/>
            <person name="Weidman J.F."/>
            <person name="Fuhrmann J.L."/>
            <person name="Nguyen D."/>
            <person name="Utterback T.R."/>
            <person name="Kelley J.M."/>
            <person name="Peterson J.D."/>
            <person name="Sadow P.W."/>
            <person name="Hanna M.C."/>
            <person name="Cotton M.D."/>
            <person name="Roberts K.M."/>
            <person name="Hurst M.A."/>
            <person name="Kaine B.P."/>
            <person name="Borodovsky M."/>
            <person name="Klenk H.-P."/>
            <person name="Fraser C.M."/>
            <person name="Smith H.O."/>
            <person name="Woese C.R."/>
            <person name="Venter J.C."/>
        </authorList>
    </citation>
    <scope>NUCLEOTIDE SEQUENCE [LARGE SCALE GENOMIC DNA]</scope>
    <source>
        <strain>ATCC 43067 / DSM 2661 / JAL-1 / JCM 10045 / NBRC 100440</strain>
    </source>
</reference>
<name>FWDD_METJA</name>
<accession>Q58568</accession>
<protein>
    <recommendedName>
        <fullName>Protein FwdD</fullName>
    </recommendedName>
</protein>
<proteinExistence type="predicted"/>
<gene>
    <name type="primary">fwdD</name>
    <name type="ordered locus">MJ1168</name>
</gene>
<dbReference type="EMBL" id="L77117">
    <property type="protein sequence ID" value="AAB99170.1"/>
    <property type="molecule type" value="Genomic_DNA"/>
</dbReference>
<dbReference type="PIR" id="G64445">
    <property type="entry name" value="G64445"/>
</dbReference>
<dbReference type="RefSeq" id="WP_010870681.1">
    <property type="nucleotide sequence ID" value="NC_000909.1"/>
</dbReference>
<dbReference type="SMR" id="Q58568"/>
<dbReference type="FunCoup" id="Q58568">
    <property type="interactions" value="93"/>
</dbReference>
<dbReference type="STRING" id="243232.MJ_1168"/>
<dbReference type="PaxDb" id="243232-MJ_1168"/>
<dbReference type="EnsemblBacteria" id="AAB99170">
    <property type="protein sequence ID" value="AAB99170"/>
    <property type="gene ID" value="MJ_1168"/>
</dbReference>
<dbReference type="GeneID" id="1452066"/>
<dbReference type="KEGG" id="mja:MJ_1168"/>
<dbReference type="eggNOG" id="arCOG02674">
    <property type="taxonomic scope" value="Archaea"/>
</dbReference>
<dbReference type="HOGENOM" id="CLU_123704_1_0_2"/>
<dbReference type="InParanoid" id="Q58568"/>
<dbReference type="OrthoDB" id="116806at2157"/>
<dbReference type="PhylomeDB" id="Q58568"/>
<dbReference type="Proteomes" id="UP000000805">
    <property type="component" value="Chromosome"/>
</dbReference>
<dbReference type="GO" id="GO:0043546">
    <property type="term" value="F:molybdopterin cofactor binding"/>
    <property type="evidence" value="ECO:0007669"/>
    <property type="project" value="InterPro"/>
</dbReference>
<dbReference type="GO" id="GO:0016491">
    <property type="term" value="F:oxidoreductase activity"/>
    <property type="evidence" value="ECO:0007669"/>
    <property type="project" value="InterPro"/>
</dbReference>
<dbReference type="CDD" id="cd02789">
    <property type="entry name" value="MopB_CT_FmdC-FwdD"/>
    <property type="match status" value="1"/>
</dbReference>
<dbReference type="Gene3D" id="2.40.40.20">
    <property type="match status" value="1"/>
</dbReference>
<dbReference type="InterPro" id="IPR053637">
    <property type="entry name" value="Archaeal_lipid_biosynth_FwdD"/>
</dbReference>
<dbReference type="InterPro" id="IPR009010">
    <property type="entry name" value="Asp_de-COase-like_dom_sf"/>
</dbReference>
<dbReference type="InterPro" id="IPR041717">
    <property type="entry name" value="FmdC/FwdD_MopB-bd"/>
</dbReference>
<dbReference type="InterPro" id="IPR012040">
    <property type="entry name" value="Formylmethanofuran_DH_dsu"/>
</dbReference>
<dbReference type="InterPro" id="IPR006657">
    <property type="entry name" value="MoPterin_dinucl-bd_dom"/>
</dbReference>
<dbReference type="InterPro" id="IPR050123">
    <property type="entry name" value="Prok_molybdopt-oxidoreductase"/>
</dbReference>
<dbReference type="NCBIfam" id="NF042908">
    <property type="entry name" value="FMD_DH_FwdD"/>
    <property type="match status" value="1"/>
</dbReference>
<dbReference type="PANTHER" id="PTHR43105">
    <property type="entry name" value="RESPIRATORY NITRATE REDUCTASE"/>
    <property type="match status" value="1"/>
</dbReference>
<dbReference type="PANTHER" id="PTHR43105:SF2">
    <property type="entry name" value="RESPIRATORY NITRATE REDUCTASE 2 ALPHA CHAIN"/>
    <property type="match status" value="1"/>
</dbReference>
<dbReference type="Pfam" id="PF01568">
    <property type="entry name" value="Molydop_binding"/>
    <property type="match status" value="1"/>
</dbReference>
<dbReference type="PIRSF" id="PIRSF015873">
    <property type="entry name" value="FwdD"/>
    <property type="match status" value="1"/>
</dbReference>
<dbReference type="SUPFAM" id="SSF50692">
    <property type="entry name" value="ADC-like"/>
    <property type="match status" value="1"/>
</dbReference>
<keyword id="KW-1185">Reference proteome</keyword>